<evidence type="ECO:0000255" key="1">
    <source>
        <dbReference type="HAMAP-Rule" id="MF_01910"/>
    </source>
</evidence>
<accession>A8M8Y9</accession>
<name>FAU1_CALMQ</name>
<gene>
    <name evidence="1" type="primary">fau-1</name>
    <name type="ordered locus">Cmaq_1382</name>
</gene>
<reference key="1">
    <citation type="submission" date="2007-10" db="EMBL/GenBank/DDBJ databases">
        <title>Complete sequence of Caldivirga maquilingensis IC-167.</title>
        <authorList>
            <consortium name="US DOE Joint Genome Institute"/>
            <person name="Copeland A."/>
            <person name="Lucas S."/>
            <person name="Lapidus A."/>
            <person name="Barry K."/>
            <person name="Glavina del Rio T."/>
            <person name="Dalin E."/>
            <person name="Tice H."/>
            <person name="Pitluck S."/>
            <person name="Saunders E."/>
            <person name="Brettin T."/>
            <person name="Bruce D."/>
            <person name="Detter J.C."/>
            <person name="Han C."/>
            <person name="Schmutz J."/>
            <person name="Larimer F."/>
            <person name="Land M."/>
            <person name="Hauser L."/>
            <person name="Kyrpides N."/>
            <person name="Ivanova N."/>
            <person name="Biddle J.F."/>
            <person name="Zhang Z."/>
            <person name="Fitz-Gibbon S.T."/>
            <person name="Lowe T.M."/>
            <person name="Saltikov C."/>
            <person name="House C.H."/>
            <person name="Richardson P."/>
        </authorList>
    </citation>
    <scope>NUCLEOTIDE SEQUENCE [LARGE SCALE GENOMIC DNA]</scope>
    <source>
        <strain>ATCC 700844 / DSM 13496 / JCM 10307 / IC-167</strain>
    </source>
</reference>
<keyword id="KW-0255">Endonuclease</keyword>
<keyword id="KW-0378">Hydrolase</keyword>
<keyword id="KW-0540">Nuclease</keyword>
<keyword id="KW-1185">Reference proteome</keyword>
<keyword id="KW-0694">RNA-binding</keyword>
<keyword id="KW-0698">rRNA processing</keyword>
<organism>
    <name type="scientific">Caldivirga maquilingensis (strain ATCC 700844 / DSM 13496 / JCM 10307 / IC-167)</name>
    <dbReference type="NCBI Taxonomy" id="397948"/>
    <lineage>
        <taxon>Archaea</taxon>
        <taxon>Thermoproteota</taxon>
        <taxon>Thermoprotei</taxon>
        <taxon>Thermoproteales</taxon>
        <taxon>Thermoproteaceae</taxon>
        <taxon>Caldivirga</taxon>
    </lineage>
</organism>
<feature type="chain" id="PRO_0000334193" description="Probable ribonuclease FAU-1">
    <location>
        <begin position="1"/>
        <end position="471"/>
    </location>
</feature>
<sequence length="471" mass="52266">MTKVRVRGIYATALTKIMLEDGYDIVQATDTILSRFNILHSTEPPDVTIKDDENIPGALFIIGKCSEVNKVLESILRRVGDVAYNKPPVPLYSVIMGVVADNGHIEVAPGVLALLEGSNYFRPGDKLPVTMVNVTGQLRASPYIMPTTSYLRVIDSPTVRLSRHIKDPDAKMMLVRVGLSKINQLGGLGIRWRSSAQYLSEEDAEKALDEAISLVNAIRVKIAEARDYDMLFEGECIVSVILDAEARWVLDDIRNTIVPTVKGHHALKITMKNTEILDYTEYLVGELKMRDELGRALANYALSNLSTINVHHVKVNGEHINLGPGERVHYSNGLLIIRRELKPGGTLDGLNVAKEYGDAAYSVINIGERHLTHIYVSHDGSFKGAYVNINTPIEVTWDGVIYIDLEVDLTVDKGFNVNIIDEDKLSSIPSRRLINEAEEELSRLKGDVVNLVRNHIDTLSKLGLSIHYQGP</sequence>
<comment type="function">
    <text evidence="1">Probable RNase involved in rRNA stability through maturation and/or degradation of precursor rRNAs. Binds to RNA in loop regions with AU-rich sequences.</text>
</comment>
<comment type="similarity">
    <text evidence="1">Belongs to the FAU-1 family.</text>
</comment>
<protein>
    <recommendedName>
        <fullName evidence="1">Probable ribonuclease FAU-1</fullName>
        <ecNumber evidence="1">3.1.26.-</ecNumber>
    </recommendedName>
    <alternativeName>
        <fullName evidence="1">RNA-binding protein FAU-1</fullName>
    </alternativeName>
</protein>
<dbReference type="EC" id="3.1.26.-" evidence="1"/>
<dbReference type="EMBL" id="CP000852">
    <property type="protein sequence ID" value="ABW02208.1"/>
    <property type="molecule type" value="Genomic_DNA"/>
</dbReference>
<dbReference type="RefSeq" id="WP_012186427.1">
    <property type="nucleotide sequence ID" value="NC_009954.1"/>
</dbReference>
<dbReference type="SMR" id="A8M8Y9"/>
<dbReference type="STRING" id="397948.Cmaq_1382"/>
<dbReference type="GeneID" id="5709315"/>
<dbReference type="KEGG" id="cma:Cmaq_1382"/>
<dbReference type="eggNOG" id="arCOG04307">
    <property type="taxonomic scope" value="Archaea"/>
</dbReference>
<dbReference type="HOGENOM" id="CLU_044303_0_0_2"/>
<dbReference type="OrthoDB" id="84798at2157"/>
<dbReference type="Proteomes" id="UP000001137">
    <property type="component" value="Chromosome"/>
</dbReference>
<dbReference type="GO" id="GO:0035925">
    <property type="term" value="F:mRNA 3'-UTR AU-rich region binding"/>
    <property type="evidence" value="ECO:0007669"/>
    <property type="project" value="UniProtKB-UniRule"/>
</dbReference>
<dbReference type="GO" id="GO:0016891">
    <property type="term" value="F:RNA endonuclease activity, producing 5'-phosphomonoesters"/>
    <property type="evidence" value="ECO:0007669"/>
    <property type="project" value="UniProtKB-UniRule"/>
</dbReference>
<dbReference type="GO" id="GO:0006364">
    <property type="term" value="P:rRNA processing"/>
    <property type="evidence" value="ECO:0007669"/>
    <property type="project" value="UniProtKB-UniRule"/>
</dbReference>
<dbReference type="Gene3D" id="2.40.380.10">
    <property type="entry name" value="FomD-like"/>
    <property type="match status" value="1"/>
</dbReference>
<dbReference type="HAMAP" id="MF_01910">
    <property type="entry name" value="RNA_binding_AU_1"/>
    <property type="match status" value="1"/>
</dbReference>
<dbReference type="InterPro" id="IPR007295">
    <property type="entry name" value="DUF402"/>
</dbReference>
<dbReference type="InterPro" id="IPR035930">
    <property type="entry name" value="FomD-like_sf"/>
</dbReference>
<dbReference type="InterPro" id="IPR050212">
    <property type="entry name" value="Ntdp-like"/>
</dbReference>
<dbReference type="InterPro" id="IPR016730">
    <property type="entry name" value="RNA-bd_FAU-1"/>
</dbReference>
<dbReference type="PANTHER" id="PTHR39159">
    <property type="match status" value="1"/>
</dbReference>
<dbReference type="PANTHER" id="PTHR39159:SF1">
    <property type="entry name" value="UPF0374 PROTEIN YGAC"/>
    <property type="match status" value="1"/>
</dbReference>
<dbReference type="Pfam" id="PF04167">
    <property type="entry name" value="DUF402"/>
    <property type="match status" value="1"/>
</dbReference>
<dbReference type="SUPFAM" id="SSF159234">
    <property type="entry name" value="FomD-like"/>
    <property type="match status" value="1"/>
</dbReference>
<proteinExistence type="inferred from homology"/>